<keyword id="KW-0903">Direct protein sequencing</keyword>
<keyword id="KW-0539">Nucleus</keyword>
<keyword id="KW-0597">Phosphoprotein</keyword>
<keyword id="KW-1185">Reference proteome</keyword>
<keyword id="KW-0804">Transcription</keyword>
<keyword id="KW-0805">Transcription regulation</keyword>
<name>TAF11_YEAST</name>
<proteinExistence type="evidence at protein level"/>
<gene>
    <name type="primary">TAF11</name>
    <name type="synonym">TAF40</name>
    <name type="ordered locus">YML015C</name>
    <name type="ORF">YM9571.03C</name>
</gene>
<feature type="chain" id="PRO_0000118907" description="Transcription initiation factor TFIID subunit 11">
    <location>
        <begin position="1"/>
        <end position="346"/>
    </location>
</feature>
<feature type="domain" description="Histone-fold">
    <location>
        <begin position="131"/>
        <end position="329"/>
    </location>
</feature>
<feature type="modified residue" description="Phosphoserine" evidence="7">
    <location>
        <position position="236"/>
    </location>
</feature>
<feature type="modified residue" description="Phosphoserine" evidence="7">
    <location>
        <position position="238"/>
    </location>
</feature>
<evidence type="ECO:0000269" key="1">
    <source>
    </source>
</evidence>
<evidence type="ECO:0000269" key="2">
    <source>
    </source>
</evidence>
<evidence type="ECO:0000269" key="3">
    <source>
    </source>
</evidence>
<evidence type="ECO:0000269" key="4">
    <source>
    </source>
</evidence>
<evidence type="ECO:0000269" key="5">
    <source>
    </source>
</evidence>
<evidence type="ECO:0000305" key="6"/>
<evidence type="ECO:0007744" key="7">
    <source>
    </source>
</evidence>
<organism>
    <name type="scientific">Saccharomyces cerevisiae (strain ATCC 204508 / S288c)</name>
    <name type="common">Baker's yeast</name>
    <dbReference type="NCBI Taxonomy" id="559292"/>
    <lineage>
        <taxon>Eukaryota</taxon>
        <taxon>Fungi</taxon>
        <taxon>Dikarya</taxon>
        <taxon>Ascomycota</taxon>
        <taxon>Saccharomycotina</taxon>
        <taxon>Saccharomycetes</taxon>
        <taxon>Saccharomycetales</taxon>
        <taxon>Saccharomycetaceae</taxon>
        <taxon>Saccharomyces</taxon>
    </lineage>
</organism>
<dbReference type="EMBL" id="U85960">
    <property type="protein sequence ID" value="AAB46715.1"/>
    <property type="molecule type" value="Genomic_DNA"/>
</dbReference>
<dbReference type="EMBL" id="Z49810">
    <property type="protein sequence ID" value="CAA89937.1"/>
    <property type="molecule type" value="Genomic_DNA"/>
</dbReference>
<dbReference type="EMBL" id="AY692911">
    <property type="protein sequence ID" value="AAT92930.1"/>
    <property type="molecule type" value="Genomic_DNA"/>
</dbReference>
<dbReference type="EMBL" id="BK006946">
    <property type="protein sequence ID" value="DAA09883.1"/>
    <property type="molecule type" value="Genomic_DNA"/>
</dbReference>
<dbReference type="PIR" id="S55104">
    <property type="entry name" value="S55104"/>
</dbReference>
<dbReference type="RefSeq" id="NP_013697.1">
    <property type="nucleotide sequence ID" value="NM_001182373.1"/>
</dbReference>
<dbReference type="SMR" id="Q04226"/>
<dbReference type="BioGRID" id="35154">
    <property type="interactions" value="287"/>
</dbReference>
<dbReference type="ComplexPortal" id="CPX-1642">
    <property type="entry name" value="General transcription factor complex TFIID"/>
</dbReference>
<dbReference type="DIP" id="DIP-1686N"/>
<dbReference type="FunCoup" id="Q04226">
    <property type="interactions" value="292"/>
</dbReference>
<dbReference type="IntAct" id="Q04226">
    <property type="interactions" value="20"/>
</dbReference>
<dbReference type="MINT" id="Q04226"/>
<dbReference type="STRING" id="4932.YML015C"/>
<dbReference type="iPTMnet" id="Q04226"/>
<dbReference type="PaxDb" id="4932-YML015C"/>
<dbReference type="PeptideAtlas" id="Q04226"/>
<dbReference type="EnsemblFungi" id="YML015C_mRNA">
    <property type="protein sequence ID" value="YML015C"/>
    <property type="gene ID" value="YML015C"/>
</dbReference>
<dbReference type="GeneID" id="854993"/>
<dbReference type="KEGG" id="sce:YML015C"/>
<dbReference type="AGR" id="SGD:S000004477"/>
<dbReference type="SGD" id="S000004477">
    <property type="gene designation" value="TAF11"/>
</dbReference>
<dbReference type="VEuPathDB" id="FungiDB:YML015C"/>
<dbReference type="eggNOG" id="KOG3219">
    <property type="taxonomic scope" value="Eukaryota"/>
</dbReference>
<dbReference type="GeneTree" id="ENSGT00390000013228"/>
<dbReference type="HOGENOM" id="CLU_048787_0_0_1"/>
<dbReference type="InParanoid" id="Q04226"/>
<dbReference type="OMA" id="GNGWMFR"/>
<dbReference type="OrthoDB" id="28335at2759"/>
<dbReference type="BioCyc" id="YEAST:G3O-32619-MONOMER"/>
<dbReference type="Reactome" id="R-SCE-674695">
    <property type="pathway name" value="RNA Polymerase II Pre-transcription Events"/>
</dbReference>
<dbReference type="Reactome" id="R-SCE-6807505">
    <property type="pathway name" value="RNA polymerase II transcribes snRNA genes"/>
</dbReference>
<dbReference type="Reactome" id="R-SCE-73776">
    <property type="pathway name" value="RNA Polymerase II Promoter Escape"/>
</dbReference>
<dbReference type="Reactome" id="R-SCE-73779">
    <property type="pathway name" value="RNA Polymerase II Transcription Pre-Initiation And Promoter Opening"/>
</dbReference>
<dbReference type="Reactome" id="R-SCE-75953">
    <property type="pathway name" value="RNA Polymerase II Transcription Initiation"/>
</dbReference>
<dbReference type="Reactome" id="R-SCE-76042">
    <property type="pathway name" value="RNA Polymerase II Transcription Initiation And Promoter Clearance"/>
</dbReference>
<dbReference type="BioGRID-ORCS" id="854993">
    <property type="hits" value="6 hits in 10 CRISPR screens"/>
</dbReference>
<dbReference type="PRO" id="PR:Q04226"/>
<dbReference type="Proteomes" id="UP000002311">
    <property type="component" value="Chromosome XIII"/>
</dbReference>
<dbReference type="RNAct" id="Q04226">
    <property type="molecule type" value="protein"/>
</dbReference>
<dbReference type="GO" id="GO:0005634">
    <property type="term" value="C:nucleus"/>
    <property type="evidence" value="ECO:0000303"/>
    <property type="project" value="ComplexPortal"/>
</dbReference>
<dbReference type="GO" id="GO:0005669">
    <property type="term" value="C:transcription factor TFIID complex"/>
    <property type="evidence" value="ECO:0000314"/>
    <property type="project" value="SGD"/>
</dbReference>
<dbReference type="GO" id="GO:0003682">
    <property type="term" value="F:chromatin binding"/>
    <property type="evidence" value="ECO:0000314"/>
    <property type="project" value="SGD"/>
</dbReference>
<dbReference type="GO" id="GO:0046982">
    <property type="term" value="F:protein heterodimerization activity"/>
    <property type="evidence" value="ECO:0007669"/>
    <property type="project" value="InterPro"/>
</dbReference>
<dbReference type="GO" id="GO:0045944">
    <property type="term" value="P:positive regulation of transcription by RNA polymerase II"/>
    <property type="evidence" value="ECO:0000314"/>
    <property type="project" value="ComplexPortal"/>
</dbReference>
<dbReference type="GO" id="GO:0051123">
    <property type="term" value="P:RNA polymerase II preinitiation complex assembly"/>
    <property type="evidence" value="ECO:0000315"/>
    <property type="project" value="SGD"/>
</dbReference>
<dbReference type="GO" id="GO:0006366">
    <property type="term" value="P:transcription by RNA polymerase II"/>
    <property type="evidence" value="ECO:0000314"/>
    <property type="project" value="SGD"/>
</dbReference>
<dbReference type="CDD" id="cd08048">
    <property type="entry name" value="HFD_TAF11"/>
    <property type="match status" value="1"/>
</dbReference>
<dbReference type="Gene3D" id="1.10.20.10">
    <property type="entry name" value="Histone, subunit A"/>
    <property type="match status" value="1"/>
</dbReference>
<dbReference type="InterPro" id="IPR009072">
    <property type="entry name" value="Histone-fold"/>
</dbReference>
<dbReference type="InterPro" id="IPR045127">
    <property type="entry name" value="TAF11-like"/>
</dbReference>
<dbReference type="InterPro" id="IPR006809">
    <property type="entry name" value="TAFII28_dom"/>
</dbReference>
<dbReference type="PANTHER" id="PTHR13218:SF8">
    <property type="entry name" value="TRANSCRIPTION INITIATION FACTOR TFIID SUBUNIT 11"/>
    <property type="match status" value="1"/>
</dbReference>
<dbReference type="PANTHER" id="PTHR13218">
    <property type="entry name" value="TRANSCRIPTION INITIATION FACTOR TFIID SUBUNIT 11-RELATED"/>
    <property type="match status" value="1"/>
</dbReference>
<dbReference type="Pfam" id="PF04719">
    <property type="entry name" value="TAFII28"/>
    <property type="match status" value="1"/>
</dbReference>
<dbReference type="SUPFAM" id="SSF47113">
    <property type="entry name" value="Histone-fold"/>
    <property type="match status" value="1"/>
</dbReference>
<protein>
    <recommendedName>
        <fullName>Transcription initiation factor TFIID subunit 11</fullName>
    </recommendedName>
    <alternativeName>
        <fullName>TAFII-40</fullName>
        <shortName>TAFII40</shortName>
    </alternativeName>
    <alternativeName>
        <fullName>TBP-associated factor 11</fullName>
    </alternativeName>
    <alternativeName>
        <fullName>TBP-associated factor 40 kDa</fullName>
        <shortName>P40</shortName>
    </alternativeName>
</protein>
<reference key="1">
    <citation type="journal article" date="1997" name="J. Biol. Chem.">
        <title>Cloning and characterization of an essential Saccharomyces cerevisiae gene, TAF40, which encodes yTAFII40, an RNA polymerase II-specific TATA-binding protein-associated factor.</title>
        <authorList>
            <person name="Klebanow E.R."/>
            <person name="Poon D."/>
            <person name="Zhou S."/>
            <person name="Weil P.A."/>
        </authorList>
    </citation>
    <scope>NUCLEOTIDE SEQUENCE [GENOMIC DNA]</scope>
    <scope>PROTEIN SEQUENCE OF 29-46; 125-144; 255-267 AND 323-335</scope>
</reference>
<reference key="2">
    <citation type="journal article" date="1997" name="Nature">
        <title>The nucleotide sequence of Saccharomyces cerevisiae chromosome XIII.</title>
        <authorList>
            <person name="Bowman S."/>
            <person name="Churcher C.M."/>
            <person name="Badcock K."/>
            <person name="Brown D."/>
            <person name="Chillingworth T."/>
            <person name="Connor R."/>
            <person name="Dedman K."/>
            <person name="Devlin K."/>
            <person name="Gentles S."/>
            <person name="Hamlin N."/>
            <person name="Hunt S."/>
            <person name="Jagels K."/>
            <person name="Lye G."/>
            <person name="Moule S."/>
            <person name="Odell C."/>
            <person name="Pearson D."/>
            <person name="Rajandream M.A."/>
            <person name="Rice P."/>
            <person name="Skelton J."/>
            <person name="Walsh S.V."/>
            <person name="Whitehead S."/>
            <person name="Barrell B.G."/>
        </authorList>
    </citation>
    <scope>NUCLEOTIDE SEQUENCE [LARGE SCALE GENOMIC DNA]</scope>
    <source>
        <strain>ATCC 204508 / S288c</strain>
    </source>
</reference>
<reference key="3">
    <citation type="journal article" date="2014" name="G3 (Bethesda)">
        <title>The reference genome sequence of Saccharomyces cerevisiae: Then and now.</title>
        <authorList>
            <person name="Engel S.R."/>
            <person name="Dietrich F.S."/>
            <person name="Fisk D.G."/>
            <person name="Binkley G."/>
            <person name="Balakrishnan R."/>
            <person name="Costanzo M.C."/>
            <person name="Dwight S.S."/>
            <person name="Hitz B.C."/>
            <person name="Karra K."/>
            <person name="Nash R.S."/>
            <person name="Weng S."/>
            <person name="Wong E.D."/>
            <person name="Lloyd P."/>
            <person name="Skrzypek M.S."/>
            <person name="Miyasato S.R."/>
            <person name="Simison M."/>
            <person name="Cherry J.M."/>
        </authorList>
    </citation>
    <scope>GENOME REANNOTATION</scope>
    <source>
        <strain>ATCC 204508 / S288c</strain>
    </source>
</reference>
<reference key="4">
    <citation type="journal article" date="2007" name="Genome Res.">
        <title>Approaching a complete repository of sequence-verified protein-encoding clones for Saccharomyces cerevisiae.</title>
        <authorList>
            <person name="Hu Y."/>
            <person name="Rolfs A."/>
            <person name="Bhullar B."/>
            <person name="Murthy T.V.S."/>
            <person name="Zhu C."/>
            <person name="Berger M.F."/>
            <person name="Camargo A.A."/>
            <person name="Kelley F."/>
            <person name="McCarron S."/>
            <person name="Jepson D."/>
            <person name="Richardson A."/>
            <person name="Raphael J."/>
            <person name="Moreira D."/>
            <person name="Taycher E."/>
            <person name="Zuo D."/>
            <person name="Mohr S."/>
            <person name="Kane M.F."/>
            <person name="Williamson J."/>
            <person name="Simpson A.J.G."/>
            <person name="Bulyk M.L."/>
            <person name="Harlow E."/>
            <person name="Marsischky G."/>
            <person name="Kolodner R.D."/>
            <person name="LaBaer J."/>
        </authorList>
    </citation>
    <scope>NUCLEOTIDE SEQUENCE [GENOMIC DNA]</scope>
    <source>
        <strain>ATCC 204508 / S288c</strain>
    </source>
</reference>
<reference key="5">
    <citation type="journal article" date="1998" name="Cell">
        <title>Human TAF(II)28 and TAF(II)18 interact through a histone fold encoded by atypical evolutionary conserved motifs also found in the SPT3 family.</title>
        <authorList>
            <person name="Birck C."/>
            <person name="Poch O."/>
            <person name="Romier C."/>
            <person name="Ruff M."/>
            <person name="Mengus G."/>
            <person name="Lavigne A.C."/>
            <person name="Davidson I."/>
            <person name="Moras D."/>
        </authorList>
    </citation>
    <scope>FUNCTION</scope>
    <scope>TAF-TAF INTERACTION THROUGH HISTONE-FOLD DOMAIN</scope>
</reference>
<reference key="6">
    <citation type="journal article" date="2000" name="J. Biol. Chem.">
        <title>Identification of two novel TAF subunits of the yeast Saccharomyces cerevisiae TFIID complex.</title>
        <authorList>
            <person name="Sanders S.L."/>
            <person name="Weil P.A."/>
        </authorList>
    </citation>
    <scope>FUNCTION</scope>
    <scope>SUBUNIT</scope>
</reference>
<reference key="7">
    <citation type="journal article" date="2001" name="Trends Biochem. Sci.">
        <title>The histone fold is a key structural motif of transcription factor TFIID.</title>
        <authorList>
            <person name="Gangloff Y.G."/>
            <person name="Romier C."/>
            <person name="Thuault S."/>
            <person name="Werten S."/>
            <person name="Davidson I."/>
        </authorList>
    </citation>
    <scope>FUNCTION</scope>
    <scope>HISTONE-FOLD DOMAIN CHARACTERIZATION</scope>
</reference>
<reference key="8">
    <citation type="journal article" date="2002" name="Mol. Cell. Biol.">
        <title>Molecular characterization of Saccharomyces cerevisiae TFIID.</title>
        <authorList>
            <person name="Sanders S.L."/>
            <person name="Garbett K.A."/>
            <person name="Weil P.A."/>
        </authorList>
    </citation>
    <scope>FUNCTION</scope>
    <scope>TFIID STOICHIOMETRY</scope>
</reference>
<reference key="9">
    <citation type="journal article" date="2002" name="Plant Mol. Biol.">
        <title>Multi-protein complexes in eukaryotic gene transcription.</title>
        <authorList>
            <person name="Martinez E."/>
        </authorList>
    </citation>
    <scope>FUNCTION</scope>
</reference>
<reference key="10">
    <citation type="journal article" date="2002" name="EMBO J.">
        <title>Mapping histone fold TAFs within yeast TFIID.</title>
        <authorList>
            <person name="Leurent C."/>
            <person name="Sanders S.L."/>
            <person name="Ruhlmann C."/>
            <person name="Mallouh V."/>
            <person name="Weil P.A."/>
            <person name="Kirschner D.B."/>
            <person name="Tora L."/>
            <person name="Schultz P."/>
        </authorList>
    </citation>
    <scope>3D-STRUCTURE</scope>
    <scope>ELECTRON MICROSCOPY OF TFIID</scope>
</reference>
<reference key="11">
    <citation type="journal article" date="2009" name="Science">
        <title>Global analysis of Cdk1 substrate phosphorylation sites provides insights into evolution.</title>
        <authorList>
            <person name="Holt L.J."/>
            <person name="Tuch B.B."/>
            <person name="Villen J."/>
            <person name="Johnson A.D."/>
            <person name="Gygi S.P."/>
            <person name="Morgan D.O."/>
        </authorList>
    </citation>
    <scope>PHOSPHORYLATION [LARGE SCALE ANALYSIS] AT SER-236 AND SER-238</scope>
    <scope>IDENTIFICATION BY MASS SPECTROMETRY [LARGE SCALE ANALYSIS]</scope>
</reference>
<comment type="function">
    <text evidence="1 2 3 4 5">Functions as a component of the DNA-binding general transcription factor complex TFIID. Binding of TFIID to a promoter (with or without TATA element) is the initial step in pre-initiation complex (PIC) formation. TFIID plays a key role in the regulation of gene expression by RNA polymerase II through different activities such as transcription activator interaction, core promoter recognition and selectivity, TFIIA and TFIIB interaction, chromatin modification (histone acetylation by TAF1), facilitation of DNA opening and initiation of transcription.</text>
</comment>
<comment type="subunit">
    <text evidence="1">TAF11 heterodimerizes with TAF13, but they do not seem to form a heterotetramer like TAF6/TAF9. The 1.2 MDa TFIID complex is composed of TATA binding protein (TBP) and the 14 TBP-associated factors (one copy of each TAF1, TAF2, TAF3, TAF7, TAF8, TAF11, TAF13, two copies of each TAF4, TAF5, TAF6, TAF9, TAF10, TAF12, and three copies of TAF14), ranging in size from 17 to 150 kDa.</text>
</comment>
<comment type="interaction">
    <interactant intactId="EBI-18884">
        <id>Q04226</id>
    </interactant>
    <interactant intactId="EBI-18889">
        <id>Q12030</id>
        <label>TAF10</label>
    </interactant>
    <organismsDiffer>false</organismsDiffer>
    <experiments>6</experiments>
</comment>
<comment type="interaction">
    <interactant intactId="EBI-18884">
        <id>Q04226</id>
    </interactant>
    <interactant intactId="EBI-18897">
        <id>P11747</id>
        <label>TAF13</label>
    </interactant>
    <organismsDiffer>false</organismsDiffer>
    <experiments>4</experiments>
</comment>
<comment type="interaction">
    <interactant intactId="EBI-18884">
        <id>Q04226</id>
    </interactant>
    <interactant intactId="EBI-11231">
        <id>P50105</id>
        <label>TAF4</label>
    </interactant>
    <organismsDiffer>false</organismsDiffer>
    <experiments>4</experiments>
</comment>
<comment type="subcellular location">
    <subcellularLocation>
        <location>Nucleus</location>
    </subcellularLocation>
</comment>
<comment type="similarity">
    <text evidence="6">Belongs to the TAF11 family.</text>
</comment>
<sequence>MTEPQGPLDTIPKVNYPPILTIANYFSTKQMIDQVISEDQDYVTWKLQNLRTGGTSINNQLNKYPKYKYQKTRINQQDPDSINKVPENLIFPQDILQQQTQNSNYEDTNTNEDENEKLAQDEQFKLLVTNLDKDQTNRFEVFHRTSLNKTQVKKLASTVANQTISENIRVFLQAVGKIYAGEIIELAMIVKNKWLTSQMCIEFDKRTKIGYKLKKYLKKLTFSIIENQQYKQDYQSDSVPEDEPDFYFDDEEVDKRETTLGNSLLQSKSLQQSDHNSQDLKLQLIEQYNKLVLQFNKLDVSIEKYNNSPLLPEHIREAWRLYRLQSDTLPNAYWRTQGEGQGSMFR</sequence>
<accession>Q04226</accession>
<accession>D6VZF9</accession>